<protein>
    <recommendedName>
        <fullName evidence="1">NAD(P)H-quinone oxidoreductase subunit J, chloroplastic</fullName>
        <ecNumber evidence="1">7.1.1.-</ecNumber>
    </recommendedName>
    <alternativeName>
        <fullName>NAD(P)H dehydrogenase subunit J</fullName>
    </alternativeName>
    <alternativeName>
        <fullName evidence="1">NADH-plastoquinone oxidoreductase subunit J</fullName>
    </alternativeName>
</protein>
<gene>
    <name evidence="1" type="primary">ndhJ</name>
</gene>
<organism>
    <name type="scientific">Nicotiana tomentosiformis</name>
    <name type="common">Tobacco</name>
    <dbReference type="NCBI Taxonomy" id="4098"/>
    <lineage>
        <taxon>Eukaryota</taxon>
        <taxon>Viridiplantae</taxon>
        <taxon>Streptophyta</taxon>
        <taxon>Embryophyta</taxon>
        <taxon>Tracheophyta</taxon>
        <taxon>Spermatophyta</taxon>
        <taxon>Magnoliopsida</taxon>
        <taxon>eudicotyledons</taxon>
        <taxon>Gunneridae</taxon>
        <taxon>Pentapetalae</taxon>
        <taxon>asterids</taxon>
        <taxon>lamiids</taxon>
        <taxon>Solanales</taxon>
        <taxon>Solanaceae</taxon>
        <taxon>Nicotianoideae</taxon>
        <taxon>Nicotianeae</taxon>
        <taxon>Nicotiana</taxon>
    </lineage>
</organism>
<dbReference type="EC" id="7.1.1.-" evidence="1"/>
<dbReference type="EMBL" id="AB240139">
    <property type="protein sequence ID" value="BAE48004.1"/>
    <property type="molecule type" value="Genomic_DNA"/>
</dbReference>
<dbReference type="RefSeq" id="YP_398866.1">
    <property type="nucleotide sequence ID" value="NC_007602.1"/>
</dbReference>
<dbReference type="SMR" id="Q33C31"/>
<dbReference type="GeneID" id="3776275"/>
<dbReference type="KEGG" id="nto:3776275"/>
<dbReference type="OrthoDB" id="1243565at2759"/>
<dbReference type="GO" id="GO:0009535">
    <property type="term" value="C:chloroplast thylakoid membrane"/>
    <property type="evidence" value="ECO:0007669"/>
    <property type="project" value="UniProtKB-SubCell"/>
</dbReference>
<dbReference type="GO" id="GO:0008137">
    <property type="term" value="F:NADH dehydrogenase (ubiquinone) activity"/>
    <property type="evidence" value="ECO:0007669"/>
    <property type="project" value="InterPro"/>
</dbReference>
<dbReference type="GO" id="GO:0048038">
    <property type="term" value="F:quinone binding"/>
    <property type="evidence" value="ECO:0007669"/>
    <property type="project" value="UniProtKB-KW"/>
</dbReference>
<dbReference type="GO" id="GO:0019684">
    <property type="term" value="P:photosynthesis, light reaction"/>
    <property type="evidence" value="ECO:0007669"/>
    <property type="project" value="UniProtKB-UniRule"/>
</dbReference>
<dbReference type="FunFam" id="3.30.460.80:FF:000004">
    <property type="entry name" value="NAD(P)H-quinone oxidoreductase subunit J, chloroplastic"/>
    <property type="match status" value="1"/>
</dbReference>
<dbReference type="Gene3D" id="3.30.460.80">
    <property type="entry name" value="NADH:ubiquinone oxidoreductase, 30kDa subunit"/>
    <property type="match status" value="1"/>
</dbReference>
<dbReference type="HAMAP" id="MF_01357">
    <property type="entry name" value="NDH1_NuoC"/>
    <property type="match status" value="1"/>
</dbReference>
<dbReference type="InterPro" id="IPR010218">
    <property type="entry name" value="NADH_DH_suC"/>
</dbReference>
<dbReference type="InterPro" id="IPR037232">
    <property type="entry name" value="NADH_quin_OxRdtase_su_C/D-like"/>
</dbReference>
<dbReference type="InterPro" id="IPR001268">
    <property type="entry name" value="NADH_UbQ_OxRdtase_30kDa_su"/>
</dbReference>
<dbReference type="InterPro" id="IPR020396">
    <property type="entry name" value="NADH_UbQ_OxRdtase_CS"/>
</dbReference>
<dbReference type="NCBIfam" id="NF009141">
    <property type="entry name" value="PRK12494.1"/>
    <property type="match status" value="1"/>
</dbReference>
<dbReference type="PANTHER" id="PTHR10884:SF14">
    <property type="entry name" value="NADH DEHYDROGENASE [UBIQUINONE] IRON-SULFUR PROTEIN 3, MITOCHONDRIAL"/>
    <property type="match status" value="1"/>
</dbReference>
<dbReference type="PANTHER" id="PTHR10884">
    <property type="entry name" value="NADH DEHYDROGENASE UBIQUINONE IRON-SULFUR PROTEIN 3"/>
    <property type="match status" value="1"/>
</dbReference>
<dbReference type="Pfam" id="PF00329">
    <property type="entry name" value="Complex1_30kDa"/>
    <property type="match status" value="1"/>
</dbReference>
<dbReference type="SUPFAM" id="SSF143243">
    <property type="entry name" value="Nqo5-like"/>
    <property type="match status" value="1"/>
</dbReference>
<dbReference type="PROSITE" id="PS00542">
    <property type="entry name" value="COMPLEX1_30K"/>
    <property type="match status" value="1"/>
</dbReference>
<accession>Q33C31</accession>
<feature type="chain" id="PRO_0000358286" description="NAD(P)H-quinone oxidoreductase subunit J, chloroplastic">
    <location>
        <begin position="1"/>
        <end position="158"/>
    </location>
</feature>
<geneLocation type="chloroplast"/>
<reference key="1">
    <citation type="journal article" date="2006" name="Mol. Genet. Genomics">
        <title>The chloroplast genome of Nicotiana sylvestris and Nicotiana tomentosiformis: complete sequencing confirms that the Nicotiana sylvestris progenitor is the maternal genome donor of Nicotiana tabacum.</title>
        <authorList>
            <person name="Yukawa M."/>
            <person name="Tsudzuki T."/>
            <person name="Sugiura M."/>
        </authorList>
    </citation>
    <scope>NUCLEOTIDE SEQUENCE [LARGE SCALE GENOMIC DNA]</scope>
</reference>
<name>NDHJ_NICTO</name>
<proteinExistence type="inferred from homology"/>
<keyword id="KW-0150">Chloroplast</keyword>
<keyword id="KW-0472">Membrane</keyword>
<keyword id="KW-0520">NAD</keyword>
<keyword id="KW-0521">NADP</keyword>
<keyword id="KW-0934">Plastid</keyword>
<keyword id="KW-0618">Plastoquinone</keyword>
<keyword id="KW-0874">Quinone</keyword>
<keyword id="KW-0793">Thylakoid</keyword>
<keyword id="KW-1278">Translocase</keyword>
<keyword id="KW-0813">Transport</keyword>
<comment type="function">
    <text evidence="1">NDH shuttles electrons from NAD(P)H:plastoquinone, via FMN and iron-sulfur (Fe-S) centers, to quinones in the photosynthetic chain and possibly in a chloroplast respiratory chain. The immediate electron acceptor for the enzyme in this species is believed to be plastoquinone. Couples the redox reaction to proton translocation, and thus conserves the redox energy in a proton gradient.</text>
</comment>
<comment type="catalytic activity">
    <reaction evidence="1">
        <text>a plastoquinone + NADH + (n+1) H(+)(in) = a plastoquinol + NAD(+) + n H(+)(out)</text>
        <dbReference type="Rhea" id="RHEA:42608"/>
        <dbReference type="Rhea" id="RHEA-COMP:9561"/>
        <dbReference type="Rhea" id="RHEA-COMP:9562"/>
        <dbReference type="ChEBI" id="CHEBI:15378"/>
        <dbReference type="ChEBI" id="CHEBI:17757"/>
        <dbReference type="ChEBI" id="CHEBI:57540"/>
        <dbReference type="ChEBI" id="CHEBI:57945"/>
        <dbReference type="ChEBI" id="CHEBI:62192"/>
    </reaction>
</comment>
<comment type="catalytic activity">
    <reaction evidence="1">
        <text>a plastoquinone + NADPH + (n+1) H(+)(in) = a plastoquinol + NADP(+) + n H(+)(out)</text>
        <dbReference type="Rhea" id="RHEA:42612"/>
        <dbReference type="Rhea" id="RHEA-COMP:9561"/>
        <dbReference type="Rhea" id="RHEA-COMP:9562"/>
        <dbReference type="ChEBI" id="CHEBI:15378"/>
        <dbReference type="ChEBI" id="CHEBI:17757"/>
        <dbReference type="ChEBI" id="CHEBI:57783"/>
        <dbReference type="ChEBI" id="CHEBI:58349"/>
        <dbReference type="ChEBI" id="CHEBI:62192"/>
    </reaction>
</comment>
<comment type="subunit">
    <text evidence="1">NDH is composed of at least 16 different subunits, 5 of which are encoded in the nucleus.</text>
</comment>
<comment type="subcellular location">
    <subcellularLocation>
        <location evidence="1">Plastid</location>
        <location evidence="1">Chloroplast thylakoid membrane</location>
        <topology evidence="1">Peripheral membrane protein</topology>
        <orientation evidence="1">Stromal side</orientation>
    </subcellularLocation>
</comment>
<comment type="similarity">
    <text evidence="1">Belongs to the complex I 30 kDa subunit family.</text>
</comment>
<sequence>MQGRLSAWLVKHGLIHRSLGFDYQGIETLQIKPEDWHSIAVIFYVYGYNYLRSQCAYDVAPGGLLASVYHLTRIEDGVDQPEEVCIKVFASRRNPRIPSVFWVWKSVDFQERESYDMLGISYDNHPRLKRILMPESWIGWPLRKDYIAPNFYEIQDAH</sequence>
<evidence type="ECO:0000255" key="1">
    <source>
        <dbReference type="HAMAP-Rule" id="MF_01357"/>
    </source>
</evidence>